<evidence type="ECO:0000255" key="1"/>
<evidence type="ECO:0000305" key="2"/>
<proteinExistence type="predicted"/>
<feature type="chain" id="PRO_0000203484" description="Uncharacterized membrane glycoprotein YNR066C">
    <location>
        <begin position="1"/>
        <end position="436"/>
    </location>
</feature>
<feature type="transmembrane region" description="Helical" evidence="1">
    <location>
        <begin position="1"/>
        <end position="21"/>
    </location>
</feature>
<feature type="repeat" description="BNR 1">
    <location>
        <begin position="57"/>
        <end position="68"/>
    </location>
</feature>
<feature type="repeat" description="BNR 2">
    <location>
        <begin position="101"/>
        <end position="112"/>
    </location>
</feature>
<feature type="repeat" description="BNR 3">
    <location>
        <begin position="229"/>
        <end position="240"/>
    </location>
</feature>
<feature type="repeat" description="BNR 4">
    <location>
        <begin position="394"/>
        <end position="405"/>
    </location>
</feature>
<feature type="glycosylation site" description="N-linked (GlcNAc...) asparagine" evidence="1">
    <location>
        <position position="157"/>
    </location>
</feature>
<comment type="subcellular location">
    <subcellularLocation>
        <location evidence="2">Membrane</location>
        <topology evidence="2">Single-pass membrane protein</topology>
    </subcellularLocation>
</comment>
<gene>
    <name type="ordered locus">YNR066C</name>
    <name type="ORF">N3543</name>
</gene>
<dbReference type="EMBL" id="Z71681">
    <property type="protein sequence ID" value="CAA96348.1"/>
    <property type="molecule type" value="Genomic_DNA"/>
</dbReference>
<dbReference type="EMBL" id="BK006947">
    <property type="protein sequence ID" value="DAA10607.1"/>
    <property type="molecule type" value="Genomic_DNA"/>
</dbReference>
<dbReference type="PIR" id="S63398">
    <property type="entry name" value="S63398"/>
</dbReference>
<dbReference type="RefSeq" id="NP_014464.3">
    <property type="nucleotide sequence ID" value="NM_001183243.3"/>
</dbReference>
<dbReference type="BioGRID" id="35892">
    <property type="interactions" value="43"/>
</dbReference>
<dbReference type="DIP" id="DIP-4562N"/>
<dbReference type="FunCoup" id="P53752">
    <property type="interactions" value="82"/>
</dbReference>
<dbReference type="IntAct" id="P53752">
    <property type="interactions" value="1"/>
</dbReference>
<dbReference type="MINT" id="P53752"/>
<dbReference type="STRING" id="4932.YNR066C"/>
<dbReference type="GlyGen" id="P53752">
    <property type="glycosylation" value="1 site"/>
</dbReference>
<dbReference type="PaxDb" id="4932-YNR066C"/>
<dbReference type="PeptideAtlas" id="P53752"/>
<dbReference type="EnsemblFungi" id="YNR066C_mRNA">
    <property type="protein sequence ID" value="YNR066C"/>
    <property type="gene ID" value="YNR066C"/>
</dbReference>
<dbReference type="GeneID" id="855803"/>
<dbReference type="KEGG" id="sce:YNR066C"/>
<dbReference type="AGR" id="SGD:S000005349"/>
<dbReference type="SGD" id="S000005349">
    <property type="gene designation" value="YNR066C"/>
</dbReference>
<dbReference type="VEuPathDB" id="FungiDB:YNR066C"/>
<dbReference type="eggNOG" id="KOG3511">
    <property type="taxonomic scope" value="Eukaryota"/>
</dbReference>
<dbReference type="GeneTree" id="ENSGT00940000180970"/>
<dbReference type="HOGENOM" id="CLU_031415_0_0_1"/>
<dbReference type="InParanoid" id="P53752"/>
<dbReference type="OMA" id="VEWTINP"/>
<dbReference type="OrthoDB" id="4066654at2759"/>
<dbReference type="BioCyc" id="YEAST:G3O-33370-MONOMER"/>
<dbReference type="BioGRID-ORCS" id="855803">
    <property type="hits" value="0 hits in 10 CRISPR screens"/>
</dbReference>
<dbReference type="PRO" id="PR:P53752"/>
<dbReference type="Proteomes" id="UP000002311">
    <property type="component" value="Chromosome XIV"/>
</dbReference>
<dbReference type="RNAct" id="P53752">
    <property type="molecule type" value="protein"/>
</dbReference>
<dbReference type="GO" id="GO:0005829">
    <property type="term" value="C:cytosol"/>
    <property type="evidence" value="ECO:0007669"/>
    <property type="project" value="GOC"/>
</dbReference>
<dbReference type="GO" id="GO:0000324">
    <property type="term" value="C:fungal-type vacuole"/>
    <property type="evidence" value="ECO:0007005"/>
    <property type="project" value="SGD"/>
</dbReference>
<dbReference type="GO" id="GO:0005794">
    <property type="term" value="C:Golgi apparatus"/>
    <property type="evidence" value="ECO:0000318"/>
    <property type="project" value="GO_Central"/>
</dbReference>
<dbReference type="GO" id="GO:0016020">
    <property type="term" value="C:membrane"/>
    <property type="evidence" value="ECO:0000314"/>
    <property type="project" value="SGD"/>
</dbReference>
<dbReference type="GO" id="GO:0006895">
    <property type="term" value="P:Golgi to endosome transport"/>
    <property type="evidence" value="ECO:0000318"/>
    <property type="project" value="GO_Central"/>
</dbReference>
<dbReference type="GO" id="GO:0006896">
    <property type="term" value="P:Golgi to vacuole transport"/>
    <property type="evidence" value="ECO:0000318"/>
    <property type="project" value="GO_Central"/>
</dbReference>
<dbReference type="GO" id="GO:0006623">
    <property type="term" value="P:protein targeting to vacuole"/>
    <property type="evidence" value="ECO:0000318"/>
    <property type="project" value="GO_Central"/>
</dbReference>
<dbReference type="CDD" id="cd15482">
    <property type="entry name" value="Sialidase_non-viral"/>
    <property type="match status" value="1"/>
</dbReference>
<dbReference type="FunFam" id="2.130.10.10:FF:001564">
    <property type="entry name" value="Vacuolar protein sorting/targeting protein PEP1"/>
    <property type="match status" value="1"/>
</dbReference>
<dbReference type="Gene3D" id="2.130.10.10">
    <property type="entry name" value="YVTN repeat-like/Quinoprotein amine dehydrogenase"/>
    <property type="match status" value="1"/>
</dbReference>
<dbReference type="InterPro" id="IPR036278">
    <property type="entry name" value="Sialidase_sf"/>
</dbReference>
<dbReference type="InterPro" id="IPR031778">
    <property type="entry name" value="Sortilin_N"/>
</dbReference>
<dbReference type="InterPro" id="IPR006581">
    <property type="entry name" value="VPS10"/>
</dbReference>
<dbReference type="InterPro" id="IPR050310">
    <property type="entry name" value="VPS10-sortilin"/>
</dbReference>
<dbReference type="InterPro" id="IPR015943">
    <property type="entry name" value="WD40/YVTN_repeat-like_dom_sf"/>
</dbReference>
<dbReference type="PANTHER" id="PTHR12106">
    <property type="entry name" value="SORTILIN RELATED"/>
    <property type="match status" value="1"/>
</dbReference>
<dbReference type="PANTHER" id="PTHR12106:SF27">
    <property type="entry name" value="SORTILIN-RELATED RECEPTOR"/>
    <property type="match status" value="1"/>
</dbReference>
<dbReference type="Pfam" id="PF15902">
    <property type="entry name" value="Sortilin-Vps10"/>
    <property type="match status" value="1"/>
</dbReference>
<dbReference type="SMART" id="SM00602">
    <property type="entry name" value="VPS10"/>
    <property type="match status" value="1"/>
</dbReference>
<dbReference type="SUPFAM" id="SSF110296">
    <property type="entry name" value="Oligoxyloglucan reducing end-specific cellobiohydrolase"/>
    <property type="match status" value="1"/>
</dbReference>
<dbReference type="SUPFAM" id="SSF50939">
    <property type="entry name" value="Sialidases"/>
    <property type="match status" value="1"/>
</dbReference>
<accession>P53752</accession>
<accession>D6W1P1</accession>
<sequence length="436" mass="49655">MILLQVICTIWTCLFIPLLNAEEFVPKVTETLSEYSFSLESFDDSNSLIRLDNQVVWISSDSGENWEAVKEIEGHILELIVDPLHGQDRAFVSIHLSPKFYVTDDRGKSWRALTIPVSENCRLGTSCSIATHPTDKKYLIADCPCFINDNGYIQIQNETYFTNDGESFYNIEPSLKKKEDDHITSSSCNFVKSSKDSDIEGNDASILCLFSNHGYDSDRHLSAAYTQLALSTDGGKTFKKFDEFNDKIIYQYKILKSHIIVSTQDDRYNEMSPMDIWISNDASTFQKARLPAQVRHVHMYGIYEDSIGRIIIPISTIFTDEKNDQPAPSEILISDSQGLKFLPVEWTINPHFGYIDIASPHFLEGTIIGSFHPSFDYSHNKGKYNKKIARYETKISVDNGLTWSNLKVVDEENADSFPCDITRPERCSLQNPFYSI</sequence>
<name>YN95_YEAST</name>
<reference key="1">
    <citation type="journal article" date="1997" name="Nature">
        <title>The nucleotide sequence of Saccharomyces cerevisiae chromosome XIV and its evolutionary implications.</title>
        <authorList>
            <person name="Philippsen P."/>
            <person name="Kleine K."/>
            <person name="Poehlmann R."/>
            <person name="Duesterhoeft A."/>
            <person name="Hamberg K."/>
            <person name="Hegemann J.H."/>
            <person name="Obermaier B."/>
            <person name="Urrestarazu L.A."/>
            <person name="Aert R."/>
            <person name="Albermann K."/>
            <person name="Altmann R."/>
            <person name="Andre B."/>
            <person name="Baladron V."/>
            <person name="Ballesta J.P.G."/>
            <person name="Becam A.-M."/>
            <person name="Beinhauer J.D."/>
            <person name="Boskovic J."/>
            <person name="Buitrago M.J."/>
            <person name="Bussereau F."/>
            <person name="Coster F."/>
            <person name="Crouzet M."/>
            <person name="D'Angelo M."/>
            <person name="Dal Pero F."/>
            <person name="De Antoni A."/>
            <person name="del Rey F."/>
            <person name="Doignon F."/>
            <person name="Domdey H."/>
            <person name="Dubois E."/>
            <person name="Fiedler T.A."/>
            <person name="Fleig U."/>
            <person name="Floeth M."/>
            <person name="Fritz C."/>
            <person name="Gaillardin C."/>
            <person name="Garcia-Cantalejo J.M."/>
            <person name="Glansdorff N."/>
            <person name="Goffeau A."/>
            <person name="Gueldener U."/>
            <person name="Herbert C.J."/>
            <person name="Heumann K."/>
            <person name="Heuss-Neitzel D."/>
            <person name="Hilbert H."/>
            <person name="Hinni K."/>
            <person name="Iraqui Houssaini I."/>
            <person name="Jacquet M."/>
            <person name="Jimenez A."/>
            <person name="Jonniaux J.-L."/>
            <person name="Karpfinger-Hartl L."/>
            <person name="Lanfranchi G."/>
            <person name="Lepingle A."/>
            <person name="Levesque H."/>
            <person name="Lyck R."/>
            <person name="Maftahi M."/>
            <person name="Mallet L."/>
            <person name="Maurer C.T.C."/>
            <person name="Messenguy F."/>
            <person name="Mewes H.-W."/>
            <person name="Moestl D."/>
            <person name="Nasr F."/>
            <person name="Nicaud J.-M."/>
            <person name="Niedenthal R.K."/>
            <person name="Pandolfo D."/>
            <person name="Pierard A."/>
            <person name="Piravandi E."/>
            <person name="Planta R.J."/>
            <person name="Pohl T.M."/>
            <person name="Purnelle B."/>
            <person name="Rebischung C."/>
            <person name="Remacha M.A."/>
            <person name="Revuelta J.L."/>
            <person name="Rinke M."/>
            <person name="Saiz J.E."/>
            <person name="Sartorello F."/>
            <person name="Scherens B."/>
            <person name="Sen-Gupta M."/>
            <person name="Soler-Mira A."/>
            <person name="Urbanus J.H.M."/>
            <person name="Valle G."/>
            <person name="Van Dyck L."/>
            <person name="Verhasselt P."/>
            <person name="Vierendeels F."/>
            <person name="Vissers S."/>
            <person name="Voet M."/>
            <person name="Volckaert G."/>
            <person name="Wach A."/>
            <person name="Wambutt R."/>
            <person name="Wedler H."/>
            <person name="Zollner A."/>
            <person name="Hani J."/>
        </authorList>
    </citation>
    <scope>NUCLEOTIDE SEQUENCE [LARGE SCALE GENOMIC DNA]</scope>
    <source>
        <strain>ATCC 204508 / S288c</strain>
    </source>
</reference>
<reference key="2">
    <citation type="journal article" date="2014" name="G3 (Bethesda)">
        <title>The reference genome sequence of Saccharomyces cerevisiae: Then and now.</title>
        <authorList>
            <person name="Engel S.R."/>
            <person name="Dietrich F.S."/>
            <person name="Fisk D.G."/>
            <person name="Binkley G."/>
            <person name="Balakrishnan R."/>
            <person name="Costanzo M.C."/>
            <person name="Dwight S.S."/>
            <person name="Hitz B.C."/>
            <person name="Karra K."/>
            <person name="Nash R.S."/>
            <person name="Weng S."/>
            <person name="Wong E.D."/>
            <person name="Lloyd P."/>
            <person name="Skrzypek M.S."/>
            <person name="Miyasato S.R."/>
            <person name="Simison M."/>
            <person name="Cherry J.M."/>
        </authorList>
    </citation>
    <scope>GENOME REANNOTATION</scope>
    <source>
        <strain>ATCC 204508 / S288c</strain>
    </source>
</reference>
<protein>
    <recommendedName>
        <fullName>Uncharacterized membrane glycoprotein YNR066C</fullName>
    </recommendedName>
</protein>
<organism>
    <name type="scientific">Saccharomyces cerevisiae (strain ATCC 204508 / S288c)</name>
    <name type="common">Baker's yeast</name>
    <dbReference type="NCBI Taxonomy" id="559292"/>
    <lineage>
        <taxon>Eukaryota</taxon>
        <taxon>Fungi</taxon>
        <taxon>Dikarya</taxon>
        <taxon>Ascomycota</taxon>
        <taxon>Saccharomycotina</taxon>
        <taxon>Saccharomycetes</taxon>
        <taxon>Saccharomycetales</taxon>
        <taxon>Saccharomycetaceae</taxon>
        <taxon>Saccharomyces</taxon>
    </lineage>
</organism>
<keyword id="KW-0325">Glycoprotein</keyword>
<keyword id="KW-0472">Membrane</keyword>
<keyword id="KW-1185">Reference proteome</keyword>
<keyword id="KW-0677">Repeat</keyword>
<keyword id="KW-0812">Transmembrane</keyword>
<keyword id="KW-1133">Transmembrane helix</keyword>